<reference key="1">
    <citation type="submission" date="2003-12" db="EMBL/GenBank/DDBJ databases">
        <title>Bats and birds: flying in the face of mtDNA evolutionary rates.</title>
        <authorList>
            <person name="Worthington Wilmer J.M."/>
            <person name="Schneider C.J."/>
            <person name="Sorenson M.D."/>
        </authorList>
    </citation>
    <scope>NUCLEOTIDE SEQUENCE [GENOMIC DNA]</scope>
    <source>
        <strain>Isolate ET2</strain>
    </source>
</reference>
<name>NU2M_MYOSI</name>
<keyword id="KW-0249">Electron transport</keyword>
<keyword id="KW-0472">Membrane</keyword>
<keyword id="KW-0496">Mitochondrion</keyword>
<keyword id="KW-0999">Mitochondrion inner membrane</keyword>
<keyword id="KW-0520">NAD</keyword>
<keyword id="KW-0679">Respiratory chain</keyword>
<keyword id="KW-1278">Translocase</keyword>
<keyword id="KW-0812">Transmembrane</keyword>
<keyword id="KW-1133">Transmembrane helix</keyword>
<keyword id="KW-0813">Transport</keyword>
<keyword id="KW-0830">Ubiquinone</keyword>
<feature type="chain" id="PRO_0000247973" description="NADH-ubiquinone oxidoreductase chain 2">
    <location>
        <begin position="1"/>
        <end position="347"/>
    </location>
</feature>
<feature type="transmembrane region" description="Helical" evidence="3">
    <location>
        <begin position="1"/>
        <end position="21"/>
    </location>
</feature>
<feature type="transmembrane region" description="Helical" evidence="3">
    <location>
        <begin position="25"/>
        <end position="45"/>
    </location>
</feature>
<feature type="transmembrane region" description="Helical" evidence="3">
    <location>
        <begin position="67"/>
        <end position="87"/>
    </location>
</feature>
<feature type="transmembrane region" description="Helical" evidence="3">
    <location>
        <begin position="111"/>
        <end position="131"/>
    </location>
</feature>
<feature type="transmembrane region" description="Helical" evidence="3">
    <location>
        <begin position="144"/>
        <end position="164"/>
    </location>
</feature>
<feature type="transmembrane region" description="Helical" evidence="3">
    <location>
        <begin position="178"/>
        <end position="198"/>
    </location>
</feature>
<feature type="transmembrane region" description="Helical" evidence="3">
    <location>
        <begin position="201"/>
        <end position="221"/>
    </location>
</feature>
<feature type="transmembrane region" description="Helical" evidence="3">
    <location>
        <begin position="237"/>
        <end position="257"/>
    </location>
</feature>
<feature type="transmembrane region" description="Helical" evidence="3">
    <location>
        <begin position="274"/>
        <end position="294"/>
    </location>
</feature>
<feature type="transmembrane region" description="Helical" evidence="3">
    <location>
        <begin position="326"/>
        <end position="346"/>
    </location>
</feature>
<proteinExistence type="inferred from homology"/>
<geneLocation type="mitochondrion"/>
<dbReference type="EC" id="7.1.1.2" evidence="1"/>
<dbReference type="EMBL" id="AY504568">
    <property type="protein sequence ID" value="AAS91433.1"/>
    <property type="molecule type" value="Genomic_DNA"/>
</dbReference>
<dbReference type="SMR" id="Q330C4"/>
<dbReference type="GO" id="GO:0005743">
    <property type="term" value="C:mitochondrial inner membrane"/>
    <property type="evidence" value="ECO:0000250"/>
    <property type="project" value="UniProtKB"/>
</dbReference>
<dbReference type="GO" id="GO:0008137">
    <property type="term" value="F:NADH dehydrogenase (ubiquinone) activity"/>
    <property type="evidence" value="ECO:0000250"/>
    <property type="project" value="UniProtKB"/>
</dbReference>
<dbReference type="GO" id="GO:0006120">
    <property type="term" value="P:mitochondrial electron transport, NADH to ubiquinone"/>
    <property type="evidence" value="ECO:0000250"/>
    <property type="project" value="UniProtKB"/>
</dbReference>
<dbReference type="GO" id="GO:0032981">
    <property type="term" value="P:mitochondrial respiratory chain complex I assembly"/>
    <property type="evidence" value="ECO:0000250"/>
    <property type="project" value="UniProtKB"/>
</dbReference>
<dbReference type="InterPro" id="IPR050175">
    <property type="entry name" value="Complex_I_Subunit_2"/>
</dbReference>
<dbReference type="InterPro" id="IPR010933">
    <property type="entry name" value="NADH_DH_su2_C"/>
</dbReference>
<dbReference type="InterPro" id="IPR003917">
    <property type="entry name" value="NADH_UbQ_OxRdtase_chain2"/>
</dbReference>
<dbReference type="InterPro" id="IPR001750">
    <property type="entry name" value="ND/Mrp_TM"/>
</dbReference>
<dbReference type="PANTHER" id="PTHR46552">
    <property type="entry name" value="NADH-UBIQUINONE OXIDOREDUCTASE CHAIN 2"/>
    <property type="match status" value="1"/>
</dbReference>
<dbReference type="PANTHER" id="PTHR46552:SF1">
    <property type="entry name" value="NADH-UBIQUINONE OXIDOREDUCTASE CHAIN 2"/>
    <property type="match status" value="1"/>
</dbReference>
<dbReference type="Pfam" id="PF06444">
    <property type="entry name" value="NADH_dehy_S2_C"/>
    <property type="match status" value="1"/>
</dbReference>
<dbReference type="Pfam" id="PF00361">
    <property type="entry name" value="Proton_antipo_M"/>
    <property type="match status" value="1"/>
</dbReference>
<dbReference type="PRINTS" id="PR01436">
    <property type="entry name" value="NADHDHGNASE2"/>
</dbReference>
<gene>
    <name evidence="1" type="primary">MT-ND2</name>
    <name type="synonym">MTND2</name>
    <name type="synonym">NADH2</name>
    <name type="synonym">ND2</name>
</gene>
<organism>
    <name type="scientific">Myotis simus</name>
    <name type="common">Velvety myotis</name>
    <dbReference type="NCBI Taxonomy" id="270776"/>
    <lineage>
        <taxon>Eukaryota</taxon>
        <taxon>Metazoa</taxon>
        <taxon>Chordata</taxon>
        <taxon>Craniata</taxon>
        <taxon>Vertebrata</taxon>
        <taxon>Euteleostomi</taxon>
        <taxon>Mammalia</taxon>
        <taxon>Eutheria</taxon>
        <taxon>Laurasiatheria</taxon>
        <taxon>Chiroptera</taxon>
        <taxon>Yangochiroptera</taxon>
        <taxon>Vespertilionidae</taxon>
        <taxon>Myotis</taxon>
    </lineage>
</organism>
<accession>Q330C4</accession>
<evidence type="ECO:0000250" key="1">
    <source>
        <dbReference type="UniProtKB" id="P03891"/>
    </source>
</evidence>
<evidence type="ECO:0000250" key="2">
    <source>
        <dbReference type="UniProtKB" id="P03892"/>
    </source>
</evidence>
<evidence type="ECO:0000255" key="3"/>
<evidence type="ECO:0000305" key="4"/>
<protein>
    <recommendedName>
        <fullName evidence="1">NADH-ubiquinone oxidoreductase chain 2</fullName>
        <ecNumber evidence="1">7.1.1.2</ecNumber>
    </recommendedName>
    <alternativeName>
        <fullName>NADH dehydrogenase subunit 2</fullName>
    </alternativeName>
</protein>
<sequence length="347" mass="38960">MNPLTLSLVLTTMMAGTLIVMTSSHWFMIWVGFEMNMLAIIPLLTKEHNPRSTEAATKYFLTQATASMLLMMAAITNLLYTGHWSIMKLINPTASIMMTMALTMKLGLSPFHFWVPEVTQGIPLMSGLILLTWQKLAPLSGLYMIMPLINTDILLIMSLMSIAIGGWGGLNQTQLRKIMAYSSIAHMGWMMAVLAYNPTMTLLNLYIYIPMTITTFMLLMINSTTTTTSLSQTWNKLPLITTLILITMLSLGGLPPLTGFLPKWAIIQEMTKNSSIIMPTLMTLLALLNLYFYTRITYTTSLTMFPTANNMKIKWQFKNPKQMMSLPLMIMISTLVPPLAPMMPILT</sequence>
<comment type="function">
    <text evidence="1">Core subunit of the mitochondrial membrane respiratory chain NADH dehydrogenase (Complex I) which catalyzes electron transfer from NADH through the respiratory chain, using ubiquinone as an electron acceptor. Essential for the catalytic activity and assembly of complex I.</text>
</comment>
<comment type="catalytic activity">
    <reaction evidence="1">
        <text>a ubiquinone + NADH + 5 H(+)(in) = a ubiquinol + NAD(+) + 4 H(+)(out)</text>
        <dbReference type="Rhea" id="RHEA:29091"/>
        <dbReference type="Rhea" id="RHEA-COMP:9565"/>
        <dbReference type="Rhea" id="RHEA-COMP:9566"/>
        <dbReference type="ChEBI" id="CHEBI:15378"/>
        <dbReference type="ChEBI" id="CHEBI:16389"/>
        <dbReference type="ChEBI" id="CHEBI:17976"/>
        <dbReference type="ChEBI" id="CHEBI:57540"/>
        <dbReference type="ChEBI" id="CHEBI:57945"/>
        <dbReference type="EC" id="7.1.1.2"/>
    </reaction>
</comment>
<comment type="subunit">
    <text evidence="1 2">Core subunit of respiratory chain NADH dehydrogenase (Complex I) which is composed of 45 different subunits. Interacts with TMEM242 (By similarity).</text>
</comment>
<comment type="subcellular location">
    <subcellularLocation>
        <location evidence="2">Mitochondrion inner membrane</location>
        <topology evidence="3">Multi-pass membrane protein</topology>
    </subcellularLocation>
</comment>
<comment type="similarity">
    <text evidence="4">Belongs to the complex I subunit 2 family.</text>
</comment>